<name>GLMU_GEOSW</name>
<proteinExistence type="inferred from homology"/>
<reference key="1">
    <citation type="submission" date="2009-06" db="EMBL/GenBank/DDBJ databases">
        <title>Complete sequence of chromosome of Geopacillus sp. WCH70.</title>
        <authorList>
            <consortium name="US DOE Joint Genome Institute"/>
            <person name="Lucas S."/>
            <person name="Copeland A."/>
            <person name="Lapidus A."/>
            <person name="Glavina del Rio T."/>
            <person name="Dalin E."/>
            <person name="Tice H."/>
            <person name="Bruce D."/>
            <person name="Goodwin L."/>
            <person name="Pitluck S."/>
            <person name="Chertkov O."/>
            <person name="Brettin T."/>
            <person name="Detter J.C."/>
            <person name="Han C."/>
            <person name="Larimer F."/>
            <person name="Land M."/>
            <person name="Hauser L."/>
            <person name="Kyrpides N."/>
            <person name="Mikhailova N."/>
            <person name="Brumm P."/>
            <person name="Mead D.A."/>
            <person name="Richardson P."/>
        </authorList>
    </citation>
    <scope>NUCLEOTIDE SEQUENCE [LARGE SCALE GENOMIC DNA]</scope>
    <source>
        <strain>WCH70</strain>
    </source>
</reference>
<sequence length="459" mass="49660">MVKRYAVILAAGQGTRMKSKQYKVLHPVCGKPMVQHVVDQVLQLGIEKLITVVGFGAEQVKAQLGDQSEYAFQQEQLGTAHAVMQAAPYLQEKDGVTLVVCGDTPLITAETMQALLDHHLATNAKATILTAVADNPAGYGRIVRDAHGNVEKIVEHKDASEQERAIKEINTGTYCFDNKSLFEALTHVSNNNAQGEYYLTDVIEILKSNGSIISAYKAPSFEETIGVNDRVALAEAEKIMRERICRKHMMNGVTIIDPAHTYISAEVRIGRDTVIYPGTVIEGKTVIGEDCTIGPNSEIKDCWIGNGTTIRHSVAHDSEIGNDVTIGPFAHIRPSSKIDDEVRIGNFVEVKKSTFGKGSKASHLSYIGDAEVGVNVNLGCGSITVNYDGKNKHITKIEDGAFIGCNANLIAPVTVGKGAYVAAGSTITDDVPENALSIARARQVNKENYVDRLSIKKNS</sequence>
<accession>C5D371</accession>
<protein>
    <recommendedName>
        <fullName evidence="1">Bifunctional protein GlmU</fullName>
    </recommendedName>
    <domain>
        <recommendedName>
            <fullName evidence="1">UDP-N-acetylglucosamine pyrophosphorylase</fullName>
            <ecNumber evidence="1">2.7.7.23</ecNumber>
        </recommendedName>
        <alternativeName>
            <fullName evidence="1">N-acetylglucosamine-1-phosphate uridyltransferase</fullName>
        </alternativeName>
    </domain>
    <domain>
        <recommendedName>
            <fullName evidence="1">Glucosamine-1-phosphate N-acetyltransferase</fullName>
            <ecNumber evidence="1">2.3.1.157</ecNumber>
        </recommendedName>
    </domain>
</protein>
<organism>
    <name type="scientific">Geobacillus sp. (strain WCH70)</name>
    <dbReference type="NCBI Taxonomy" id="471223"/>
    <lineage>
        <taxon>Bacteria</taxon>
        <taxon>Bacillati</taxon>
        <taxon>Bacillota</taxon>
        <taxon>Bacilli</taxon>
        <taxon>Bacillales</taxon>
        <taxon>Anoxybacillaceae</taxon>
        <taxon>Geobacillus</taxon>
    </lineage>
</organism>
<gene>
    <name evidence="1" type="primary">glmU</name>
    <name type="ordered locus">GWCH70_0045</name>
</gene>
<keyword id="KW-0012">Acyltransferase</keyword>
<keyword id="KW-0133">Cell shape</keyword>
<keyword id="KW-0961">Cell wall biogenesis/degradation</keyword>
<keyword id="KW-0963">Cytoplasm</keyword>
<keyword id="KW-0460">Magnesium</keyword>
<keyword id="KW-0479">Metal-binding</keyword>
<keyword id="KW-0511">Multifunctional enzyme</keyword>
<keyword id="KW-0548">Nucleotidyltransferase</keyword>
<keyword id="KW-0573">Peptidoglycan synthesis</keyword>
<keyword id="KW-0677">Repeat</keyword>
<keyword id="KW-0808">Transferase</keyword>
<dbReference type="EC" id="2.7.7.23" evidence="1"/>
<dbReference type="EC" id="2.3.1.157" evidence="1"/>
<dbReference type="EMBL" id="CP001638">
    <property type="protein sequence ID" value="ACS22987.1"/>
    <property type="molecule type" value="Genomic_DNA"/>
</dbReference>
<dbReference type="SMR" id="C5D371"/>
<dbReference type="STRING" id="471223.GWCH70_0045"/>
<dbReference type="KEGG" id="gwc:GWCH70_0045"/>
<dbReference type="eggNOG" id="COG1207">
    <property type="taxonomic scope" value="Bacteria"/>
</dbReference>
<dbReference type="HOGENOM" id="CLU_029499_15_2_9"/>
<dbReference type="OrthoDB" id="9775031at2"/>
<dbReference type="UniPathway" id="UPA00113">
    <property type="reaction ID" value="UER00532"/>
</dbReference>
<dbReference type="UniPathway" id="UPA00113">
    <property type="reaction ID" value="UER00533"/>
</dbReference>
<dbReference type="UniPathway" id="UPA00973"/>
<dbReference type="GO" id="GO:0005737">
    <property type="term" value="C:cytoplasm"/>
    <property type="evidence" value="ECO:0007669"/>
    <property type="project" value="UniProtKB-SubCell"/>
</dbReference>
<dbReference type="GO" id="GO:0016020">
    <property type="term" value="C:membrane"/>
    <property type="evidence" value="ECO:0007669"/>
    <property type="project" value="GOC"/>
</dbReference>
<dbReference type="GO" id="GO:0019134">
    <property type="term" value="F:glucosamine-1-phosphate N-acetyltransferase activity"/>
    <property type="evidence" value="ECO:0007669"/>
    <property type="project" value="UniProtKB-UniRule"/>
</dbReference>
<dbReference type="GO" id="GO:0000287">
    <property type="term" value="F:magnesium ion binding"/>
    <property type="evidence" value="ECO:0007669"/>
    <property type="project" value="UniProtKB-UniRule"/>
</dbReference>
<dbReference type="GO" id="GO:0003977">
    <property type="term" value="F:UDP-N-acetylglucosamine diphosphorylase activity"/>
    <property type="evidence" value="ECO:0007669"/>
    <property type="project" value="UniProtKB-UniRule"/>
</dbReference>
<dbReference type="GO" id="GO:0000902">
    <property type="term" value="P:cell morphogenesis"/>
    <property type="evidence" value="ECO:0007669"/>
    <property type="project" value="UniProtKB-UniRule"/>
</dbReference>
<dbReference type="GO" id="GO:0071555">
    <property type="term" value="P:cell wall organization"/>
    <property type="evidence" value="ECO:0007669"/>
    <property type="project" value="UniProtKB-KW"/>
</dbReference>
<dbReference type="GO" id="GO:0009245">
    <property type="term" value="P:lipid A biosynthetic process"/>
    <property type="evidence" value="ECO:0007669"/>
    <property type="project" value="UniProtKB-UniRule"/>
</dbReference>
<dbReference type="GO" id="GO:0009252">
    <property type="term" value="P:peptidoglycan biosynthetic process"/>
    <property type="evidence" value="ECO:0007669"/>
    <property type="project" value="UniProtKB-UniRule"/>
</dbReference>
<dbReference type="GO" id="GO:0008360">
    <property type="term" value="P:regulation of cell shape"/>
    <property type="evidence" value="ECO:0007669"/>
    <property type="project" value="UniProtKB-KW"/>
</dbReference>
<dbReference type="GO" id="GO:0006048">
    <property type="term" value="P:UDP-N-acetylglucosamine biosynthetic process"/>
    <property type="evidence" value="ECO:0007669"/>
    <property type="project" value="UniProtKB-UniPathway"/>
</dbReference>
<dbReference type="CDD" id="cd02540">
    <property type="entry name" value="GT2_GlmU_N_bac"/>
    <property type="match status" value="1"/>
</dbReference>
<dbReference type="CDD" id="cd03353">
    <property type="entry name" value="LbH_GlmU_C"/>
    <property type="match status" value="1"/>
</dbReference>
<dbReference type="Gene3D" id="2.160.10.10">
    <property type="entry name" value="Hexapeptide repeat proteins"/>
    <property type="match status" value="1"/>
</dbReference>
<dbReference type="Gene3D" id="3.90.550.10">
    <property type="entry name" value="Spore Coat Polysaccharide Biosynthesis Protein SpsA, Chain A"/>
    <property type="match status" value="1"/>
</dbReference>
<dbReference type="HAMAP" id="MF_01631">
    <property type="entry name" value="GlmU"/>
    <property type="match status" value="1"/>
</dbReference>
<dbReference type="InterPro" id="IPR005882">
    <property type="entry name" value="Bifunctional_GlmU"/>
</dbReference>
<dbReference type="InterPro" id="IPR050065">
    <property type="entry name" value="GlmU-like"/>
</dbReference>
<dbReference type="InterPro" id="IPR038009">
    <property type="entry name" value="GlmU_C_LbH"/>
</dbReference>
<dbReference type="InterPro" id="IPR001451">
    <property type="entry name" value="Hexapep"/>
</dbReference>
<dbReference type="InterPro" id="IPR018357">
    <property type="entry name" value="Hexapep_transf_CS"/>
</dbReference>
<dbReference type="InterPro" id="IPR005835">
    <property type="entry name" value="NTP_transferase_dom"/>
</dbReference>
<dbReference type="InterPro" id="IPR029044">
    <property type="entry name" value="Nucleotide-diphossugar_trans"/>
</dbReference>
<dbReference type="InterPro" id="IPR011004">
    <property type="entry name" value="Trimer_LpxA-like_sf"/>
</dbReference>
<dbReference type="NCBIfam" id="TIGR01173">
    <property type="entry name" value="glmU"/>
    <property type="match status" value="1"/>
</dbReference>
<dbReference type="NCBIfam" id="NF010934">
    <property type="entry name" value="PRK14354.1"/>
    <property type="match status" value="1"/>
</dbReference>
<dbReference type="PANTHER" id="PTHR43584:SF3">
    <property type="entry name" value="BIFUNCTIONAL PROTEIN GLMU"/>
    <property type="match status" value="1"/>
</dbReference>
<dbReference type="PANTHER" id="PTHR43584">
    <property type="entry name" value="NUCLEOTIDYL TRANSFERASE"/>
    <property type="match status" value="1"/>
</dbReference>
<dbReference type="Pfam" id="PF00132">
    <property type="entry name" value="Hexapep"/>
    <property type="match status" value="3"/>
</dbReference>
<dbReference type="Pfam" id="PF00483">
    <property type="entry name" value="NTP_transferase"/>
    <property type="match status" value="1"/>
</dbReference>
<dbReference type="SUPFAM" id="SSF53448">
    <property type="entry name" value="Nucleotide-diphospho-sugar transferases"/>
    <property type="match status" value="1"/>
</dbReference>
<dbReference type="SUPFAM" id="SSF51161">
    <property type="entry name" value="Trimeric LpxA-like enzymes"/>
    <property type="match status" value="1"/>
</dbReference>
<dbReference type="PROSITE" id="PS00101">
    <property type="entry name" value="HEXAPEP_TRANSFERASES"/>
    <property type="match status" value="1"/>
</dbReference>
<comment type="function">
    <text evidence="1">Catalyzes the last two sequential reactions in the de novo biosynthetic pathway for UDP-N-acetylglucosamine (UDP-GlcNAc). The C-terminal domain catalyzes the transfer of acetyl group from acetyl coenzyme A to glucosamine-1-phosphate (GlcN-1-P) to produce N-acetylglucosamine-1-phosphate (GlcNAc-1-P), which is converted into UDP-GlcNAc by the transfer of uridine 5-monophosphate (from uridine 5-triphosphate), a reaction catalyzed by the N-terminal domain.</text>
</comment>
<comment type="catalytic activity">
    <reaction evidence="1">
        <text>alpha-D-glucosamine 1-phosphate + acetyl-CoA = N-acetyl-alpha-D-glucosamine 1-phosphate + CoA + H(+)</text>
        <dbReference type="Rhea" id="RHEA:13725"/>
        <dbReference type="ChEBI" id="CHEBI:15378"/>
        <dbReference type="ChEBI" id="CHEBI:57287"/>
        <dbReference type="ChEBI" id="CHEBI:57288"/>
        <dbReference type="ChEBI" id="CHEBI:57776"/>
        <dbReference type="ChEBI" id="CHEBI:58516"/>
        <dbReference type="EC" id="2.3.1.157"/>
    </reaction>
</comment>
<comment type="catalytic activity">
    <reaction evidence="1">
        <text>N-acetyl-alpha-D-glucosamine 1-phosphate + UTP + H(+) = UDP-N-acetyl-alpha-D-glucosamine + diphosphate</text>
        <dbReference type="Rhea" id="RHEA:13509"/>
        <dbReference type="ChEBI" id="CHEBI:15378"/>
        <dbReference type="ChEBI" id="CHEBI:33019"/>
        <dbReference type="ChEBI" id="CHEBI:46398"/>
        <dbReference type="ChEBI" id="CHEBI:57705"/>
        <dbReference type="ChEBI" id="CHEBI:57776"/>
        <dbReference type="EC" id="2.7.7.23"/>
    </reaction>
</comment>
<comment type="cofactor">
    <cofactor evidence="1">
        <name>Mg(2+)</name>
        <dbReference type="ChEBI" id="CHEBI:18420"/>
    </cofactor>
    <text evidence="1">Binds 1 Mg(2+) ion per subunit.</text>
</comment>
<comment type="pathway">
    <text evidence="1">Nucleotide-sugar biosynthesis; UDP-N-acetyl-alpha-D-glucosamine biosynthesis; N-acetyl-alpha-D-glucosamine 1-phosphate from alpha-D-glucosamine 6-phosphate (route II): step 2/2.</text>
</comment>
<comment type="pathway">
    <text evidence="1">Nucleotide-sugar biosynthesis; UDP-N-acetyl-alpha-D-glucosamine biosynthesis; UDP-N-acetyl-alpha-D-glucosamine from N-acetyl-alpha-D-glucosamine 1-phosphate: step 1/1.</text>
</comment>
<comment type="pathway">
    <text evidence="1">Bacterial outer membrane biogenesis; LPS lipid A biosynthesis.</text>
</comment>
<comment type="subunit">
    <text evidence="1">Homotrimer.</text>
</comment>
<comment type="subcellular location">
    <subcellularLocation>
        <location evidence="1">Cytoplasm</location>
    </subcellularLocation>
</comment>
<comment type="similarity">
    <text evidence="1">In the N-terminal section; belongs to the N-acetylglucosamine-1-phosphate uridyltransferase family.</text>
</comment>
<comment type="similarity">
    <text evidence="1">In the C-terminal section; belongs to the transferase hexapeptide repeat family.</text>
</comment>
<evidence type="ECO:0000255" key="1">
    <source>
        <dbReference type="HAMAP-Rule" id="MF_01631"/>
    </source>
</evidence>
<feature type="chain" id="PRO_1000215774" description="Bifunctional protein GlmU">
    <location>
        <begin position="1"/>
        <end position="459"/>
    </location>
</feature>
<feature type="region of interest" description="Pyrophosphorylase" evidence="1">
    <location>
        <begin position="1"/>
        <end position="230"/>
    </location>
</feature>
<feature type="region of interest" description="Linker" evidence="1">
    <location>
        <begin position="231"/>
        <end position="251"/>
    </location>
</feature>
<feature type="region of interest" description="N-acetyltransferase" evidence="1">
    <location>
        <begin position="252"/>
        <end position="459"/>
    </location>
</feature>
<feature type="active site" description="Proton acceptor" evidence="1">
    <location>
        <position position="363"/>
    </location>
</feature>
<feature type="binding site" evidence="1">
    <location>
        <begin position="9"/>
        <end position="12"/>
    </location>
    <ligand>
        <name>UDP-N-acetyl-alpha-D-glucosamine</name>
        <dbReference type="ChEBI" id="CHEBI:57705"/>
    </ligand>
</feature>
<feature type="binding site" evidence="1">
    <location>
        <position position="23"/>
    </location>
    <ligand>
        <name>UDP-N-acetyl-alpha-D-glucosamine</name>
        <dbReference type="ChEBI" id="CHEBI:57705"/>
    </ligand>
</feature>
<feature type="binding site" evidence="1">
    <location>
        <position position="73"/>
    </location>
    <ligand>
        <name>UDP-N-acetyl-alpha-D-glucosamine</name>
        <dbReference type="ChEBI" id="CHEBI:57705"/>
    </ligand>
</feature>
<feature type="binding site" evidence="1">
    <location>
        <begin position="78"/>
        <end position="79"/>
    </location>
    <ligand>
        <name>UDP-N-acetyl-alpha-D-glucosamine</name>
        <dbReference type="ChEBI" id="CHEBI:57705"/>
    </ligand>
</feature>
<feature type="binding site" evidence="1">
    <location>
        <position position="103"/>
    </location>
    <ligand>
        <name>Mg(2+)</name>
        <dbReference type="ChEBI" id="CHEBI:18420"/>
    </ligand>
</feature>
<feature type="binding site" evidence="1">
    <location>
        <position position="140"/>
    </location>
    <ligand>
        <name>UDP-N-acetyl-alpha-D-glucosamine</name>
        <dbReference type="ChEBI" id="CHEBI:57705"/>
    </ligand>
</feature>
<feature type="binding site" evidence="1">
    <location>
        <position position="155"/>
    </location>
    <ligand>
        <name>UDP-N-acetyl-alpha-D-glucosamine</name>
        <dbReference type="ChEBI" id="CHEBI:57705"/>
    </ligand>
</feature>
<feature type="binding site" evidence="1">
    <location>
        <position position="170"/>
    </location>
    <ligand>
        <name>UDP-N-acetyl-alpha-D-glucosamine</name>
        <dbReference type="ChEBI" id="CHEBI:57705"/>
    </ligand>
</feature>
<feature type="binding site" evidence="1">
    <location>
        <position position="228"/>
    </location>
    <ligand>
        <name>Mg(2+)</name>
        <dbReference type="ChEBI" id="CHEBI:18420"/>
    </ligand>
</feature>
<feature type="binding site" evidence="1">
    <location>
        <position position="228"/>
    </location>
    <ligand>
        <name>UDP-N-acetyl-alpha-D-glucosamine</name>
        <dbReference type="ChEBI" id="CHEBI:57705"/>
    </ligand>
</feature>
<feature type="binding site" evidence="1">
    <location>
        <position position="333"/>
    </location>
    <ligand>
        <name>UDP-N-acetyl-alpha-D-glucosamine</name>
        <dbReference type="ChEBI" id="CHEBI:57705"/>
    </ligand>
</feature>
<feature type="binding site" evidence="1">
    <location>
        <position position="351"/>
    </location>
    <ligand>
        <name>UDP-N-acetyl-alpha-D-glucosamine</name>
        <dbReference type="ChEBI" id="CHEBI:57705"/>
    </ligand>
</feature>
<feature type="binding site" evidence="1">
    <location>
        <position position="366"/>
    </location>
    <ligand>
        <name>UDP-N-acetyl-alpha-D-glucosamine</name>
        <dbReference type="ChEBI" id="CHEBI:57705"/>
    </ligand>
</feature>
<feature type="binding site" evidence="1">
    <location>
        <position position="377"/>
    </location>
    <ligand>
        <name>UDP-N-acetyl-alpha-D-glucosamine</name>
        <dbReference type="ChEBI" id="CHEBI:57705"/>
    </ligand>
</feature>
<feature type="binding site" evidence="1">
    <location>
        <begin position="386"/>
        <end position="387"/>
    </location>
    <ligand>
        <name>acetyl-CoA</name>
        <dbReference type="ChEBI" id="CHEBI:57288"/>
    </ligand>
</feature>
<feature type="binding site" evidence="1">
    <location>
        <position position="423"/>
    </location>
    <ligand>
        <name>acetyl-CoA</name>
        <dbReference type="ChEBI" id="CHEBI:57288"/>
    </ligand>
</feature>
<feature type="binding site" evidence="1">
    <location>
        <position position="440"/>
    </location>
    <ligand>
        <name>acetyl-CoA</name>
        <dbReference type="ChEBI" id="CHEBI:57288"/>
    </ligand>
</feature>